<reference key="1">
    <citation type="journal article" date="2008" name="Toxicon">
        <title>Molecular diversification based on analysis of expressed sequence tags from the venom glands of the Chinese bird spider Ornithoctonus huwena.</title>
        <authorList>
            <person name="Jiang L."/>
            <person name="Peng L."/>
            <person name="Chen J."/>
            <person name="Zhang Y."/>
            <person name="Xiong X."/>
            <person name="Liang S."/>
        </authorList>
    </citation>
    <scope>NUCLEOTIDE SEQUENCE [MRNA]</scope>
    <source>
        <tissue>Venom gland</tissue>
    </source>
</reference>
<proteinExistence type="inferred from homology"/>
<comment type="function">
    <text evidence="3">Probable neurotoxin with ion channel impairing activity.</text>
</comment>
<comment type="subcellular location">
    <subcellularLocation>
        <location evidence="4">Secreted</location>
    </subcellularLocation>
</comment>
<comment type="tissue specificity">
    <text evidence="4">Expressed by the venom gland.</text>
</comment>
<comment type="domain">
    <text evidence="1">The presence of a 'disulfide through disulfide knot' structurally defines this protein as a knottin.</text>
</comment>
<comment type="similarity">
    <text evidence="3">Belongs to the neurotoxin 27 (Jztx-72) family. ICK-72 subfamily.</text>
</comment>
<evidence type="ECO:0000250" key="1">
    <source>
        <dbReference type="UniProtKB" id="A0A1D0C027"/>
    </source>
</evidence>
<evidence type="ECO:0000255" key="2"/>
<evidence type="ECO:0000305" key="3"/>
<evidence type="ECO:0000305" key="4">
    <source>
    </source>
</evidence>
<evidence type="ECO:0000312" key="5">
    <source>
        <dbReference type="EMBL" id="ABY77689.1"/>
    </source>
</evidence>
<accession>B3FIP2</accession>
<name>TZ722_CYRSC</name>
<sequence length="93" mass="10674">MKAILLLAIFSVLTVAICGVSQNYGNVRYNYTELPNGEYCYIPRRRCVTTEQCCKPYDTVNNFAACGMAWPEDKKRKVNKCYICDNELTLCTR</sequence>
<feature type="signal peptide" evidence="2">
    <location>
        <begin position="1"/>
        <end position="18"/>
    </location>
</feature>
<feature type="chain" id="PRO_0000434618" description="U8-theraphotoxin-Hs1b">
    <location>
        <begin position="19"/>
        <end position="93"/>
    </location>
</feature>
<feature type="disulfide bond" evidence="1">
    <location>
        <begin position="40"/>
        <end position="81"/>
    </location>
</feature>
<feature type="disulfide bond" evidence="1">
    <location>
        <begin position="40"/>
        <end position="54"/>
    </location>
</feature>
<feature type="disulfide bond" evidence="1">
    <location>
        <begin position="53"/>
        <end position="66"/>
    </location>
</feature>
<feature type="disulfide bond" evidence="1">
    <location>
        <begin position="84"/>
        <end position="91"/>
    </location>
</feature>
<protein>
    <recommendedName>
        <fullName>U8-theraphotoxin-Hs1b</fullName>
        <shortName>U8-TRTX-Hs1b</shortName>
    </recommendedName>
    <alternativeName>
        <fullName evidence="5">HWTX-XVa2</fullName>
    </alternativeName>
</protein>
<organism>
    <name type="scientific">Cyriopagopus schmidti</name>
    <name type="common">Chinese bird spider</name>
    <name type="synonym">Haplopelma schmidti</name>
    <dbReference type="NCBI Taxonomy" id="29017"/>
    <lineage>
        <taxon>Eukaryota</taxon>
        <taxon>Metazoa</taxon>
        <taxon>Ecdysozoa</taxon>
        <taxon>Arthropoda</taxon>
        <taxon>Chelicerata</taxon>
        <taxon>Arachnida</taxon>
        <taxon>Araneae</taxon>
        <taxon>Mygalomorphae</taxon>
        <taxon>Theraphosidae</taxon>
        <taxon>Cyriopagopus</taxon>
    </lineage>
</organism>
<dbReference type="EMBL" id="EU195236">
    <property type="protein sequence ID" value="ABY77689.1"/>
    <property type="molecule type" value="mRNA"/>
</dbReference>
<dbReference type="SMR" id="B3FIP2"/>
<dbReference type="ArachnoServer" id="AS000498">
    <property type="toxin name" value="U8-theraphotoxin-Hs1b"/>
</dbReference>
<dbReference type="GO" id="GO:0005576">
    <property type="term" value="C:extracellular region"/>
    <property type="evidence" value="ECO:0007669"/>
    <property type="project" value="UniProtKB-SubCell"/>
</dbReference>
<dbReference type="GO" id="GO:0099106">
    <property type="term" value="F:ion channel regulator activity"/>
    <property type="evidence" value="ECO:0007669"/>
    <property type="project" value="UniProtKB-KW"/>
</dbReference>
<dbReference type="GO" id="GO:0090729">
    <property type="term" value="F:toxin activity"/>
    <property type="evidence" value="ECO:0007669"/>
    <property type="project" value="UniProtKB-KW"/>
</dbReference>
<dbReference type="InterPro" id="IPR035311">
    <property type="entry name" value="Cys_Knot_tox"/>
</dbReference>
<dbReference type="Pfam" id="PF17486">
    <property type="entry name" value="Cys_Knot_tox"/>
    <property type="match status" value="1"/>
</dbReference>
<keyword id="KW-1015">Disulfide bond</keyword>
<keyword id="KW-0872">Ion channel impairing toxin</keyword>
<keyword id="KW-0960">Knottin</keyword>
<keyword id="KW-0528">Neurotoxin</keyword>
<keyword id="KW-0964">Secreted</keyword>
<keyword id="KW-0732">Signal</keyword>
<keyword id="KW-0800">Toxin</keyword>